<evidence type="ECO:0000305" key="1"/>
<organism>
    <name type="scientific">Escherichia coli (strain K12)</name>
    <dbReference type="NCBI Taxonomy" id="83333"/>
    <lineage>
        <taxon>Bacteria</taxon>
        <taxon>Pseudomonadati</taxon>
        <taxon>Pseudomonadota</taxon>
        <taxon>Gammaproteobacteria</taxon>
        <taxon>Enterobacterales</taxon>
        <taxon>Enterobacteriaceae</taxon>
        <taxon>Escherichia</taxon>
    </lineage>
</organism>
<comment type="function">
    <text>Involved in the transposition of the insertion sequence IS4.</text>
</comment>
<comment type="similarity">
    <text evidence="1">Belongs to the transposase 11 family.</text>
</comment>
<reference key="1">
    <citation type="journal article" date="1981" name="Mol. Gen. Genet.">
        <title>The sequence of IS4.</title>
        <authorList>
            <person name="Klaer R."/>
            <person name="Kuhn S."/>
            <person name="Tillmann E."/>
            <person name="Fritz H.-J."/>
            <person name="Starlinger P."/>
        </authorList>
    </citation>
    <scope>NUCLEOTIDE SEQUENCE [GENOMIC DNA]</scope>
    <source>
        <strain>K12</strain>
    </source>
</reference>
<reference key="2">
    <citation type="journal article" date="1995" name="Nucleic Acids Res.">
        <title>Analysis of the Escherichia coli genome VI: DNA sequence of the region from 92.8 through 100 minutes.</title>
        <authorList>
            <person name="Burland V.D."/>
            <person name="Plunkett G. III"/>
            <person name="Sofia H.J."/>
            <person name="Daniels D.L."/>
            <person name="Blattner F.R."/>
        </authorList>
    </citation>
    <scope>NUCLEOTIDE SEQUENCE [LARGE SCALE GENOMIC DNA]</scope>
    <source>
        <strain>K12 / MG1655 / ATCC 47076</strain>
    </source>
</reference>
<reference key="3">
    <citation type="journal article" date="1997" name="Science">
        <title>The complete genome sequence of Escherichia coli K-12.</title>
        <authorList>
            <person name="Blattner F.R."/>
            <person name="Plunkett G. III"/>
            <person name="Bloch C.A."/>
            <person name="Perna N.T."/>
            <person name="Burland V."/>
            <person name="Riley M."/>
            <person name="Collado-Vides J."/>
            <person name="Glasner J.D."/>
            <person name="Rode C.K."/>
            <person name="Mayhew G.F."/>
            <person name="Gregor J."/>
            <person name="Davis N.W."/>
            <person name="Kirkpatrick H.A."/>
            <person name="Goeden M.A."/>
            <person name="Rose D.J."/>
            <person name="Mau B."/>
            <person name="Shao Y."/>
        </authorList>
    </citation>
    <scope>NUCLEOTIDE SEQUENCE [LARGE SCALE GENOMIC DNA]</scope>
    <source>
        <strain>K12 / MG1655 / ATCC 47076</strain>
    </source>
</reference>
<reference key="4">
    <citation type="journal article" date="2006" name="Mol. Syst. Biol.">
        <title>Highly accurate genome sequences of Escherichia coli K-12 strains MG1655 and W3110.</title>
        <authorList>
            <person name="Hayashi K."/>
            <person name="Morooka N."/>
            <person name="Yamamoto Y."/>
            <person name="Fujita K."/>
            <person name="Isono K."/>
            <person name="Choi S."/>
            <person name="Ohtsubo E."/>
            <person name="Baba T."/>
            <person name="Wanner B.L."/>
            <person name="Mori H."/>
            <person name="Horiuchi T."/>
        </authorList>
    </citation>
    <scope>NUCLEOTIDE SEQUENCE [LARGE SCALE GENOMIC DNA]</scope>
    <source>
        <strain>K12 / W3110 / ATCC 27325 / DSM 5911</strain>
    </source>
</reference>
<sequence length="442" mass="50386">MHIGQALDLVSRYDSLRNPLTSLGDYLDPELISRCLAESGTVTLRKRRLPLEMMVWCIVGMALERKEPLHQIVNRLDIMLPGNRPFVAPSAVIQARQRLGSEAVRRVFTKTAQLWHNATPHPHWCGLTLLAIDGVFWRTPDTPENDAAFPRQTHAGNPALYPQVKMVCQMELTSHLLTAAAFGTMKNSENELAEQLIEQTGDNTLTLMDKGYYSLGLLNAWSLAGEHRHWMIPLRKGAQYEEIRKLGKGDHLVKLKTSPQARKKWPGLGNEVTARLLTVTRKGKVCHLLTSMTDAMRFPGGEMGDLYSHRWEIELGYREIKQTMQRSRLTLRSKKPELVEQELWGVLLAYNLVRYQMIKMAEHLKGYWPNQLSFSESCGMVMRMLMTLQGASPGRIPELMRDLASMGQLVKLPTRRERAFPRVVKERPWKYPTAPKKSQSVA</sequence>
<proteinExistence type="inferred from homology"/>
<feature type="chain" id="PRO_0000173291" description="Transposase InsG for insertion sequence element IS4">
    <location>
        <begin position="1"/>
        <end position="442"/>
    </location>
</feature>
<accession>P03835</accession>
<accession>Q2M634</accession>
<name>INSG_ECOLI</name>
<dbReference type="EMBL" id="J01733">
    <property type="status" value="NOT_ANNOTATED_CDS"/>
    <property type="molecule type" value="Genomic_DNA"/>
</dbReference>
<dbReference type="EMBL" id="U14003">
    <property type="protein sequence ID" value="AAA97174.1"/>
    <property type="molecule type" value="Genomic_DNA"/>
</dbReference>
<dbReference type="EMBL" id="U00096">
    <property type="protein sequence ID" value="AAC77234.1"/>
    <property type="molecule type" value="Genomic_DNA"/>
</dbReference>
<dbReference type="EMBL" id="AP009048">
    <property type="protein sequence ID" value="BAE78272.1"/>
    <property type="molecule type" value="Genomic_DNA"/>
</dbReference>
<dbReference type="PIR" id="A04463">
    <property type="entry name" value="IEEC41"/>
</dbReference>
<dbReference type="RefSeq" id="NP_418698.1">
    <property type="nucleotide sequence ID" value="NC_000913.3"/>
</dbReference>
<dbReference type="STRING" id="511145.b4278"/>
<dbReference type="PaxDb" id="511145-b4278"/>
<dbReference type="EnsemblBacteria" id="AAC77234">
    <property type="protein sequence ID" value="AAC77234"/>
    <property type="gene ID" value="b4278"/>
</dbReference>
<dbReference type="GeneID" id="948805"/>
<dbReference type="KEGG" id="ecj:JW5767"/>
<dbReference type="KEGG" id="eco:b4278"/>
<dbReference type="KEGG" id="ecoc:C3026_23070"/>
<dbReference type="PATRIC" id="fig|1411691.4.peg.2425"/>
<dbReference type="EchoBASE" id="EB4735"/>
<dbReference type="eggNOG" id="COG3385">
    <property type="taxonomic scope" value="Bacteria"/>
</dbReference>
<dbReference type="HOGENOM" id="CLU_028400_1_1_6"/>
<dbReference type="InParanoid" id="P03835"/>
<dbReference type="OMA" id="RRERSYP"/>
<dbReference type="OrthoDB" id="9796012at2"/>
<dbReference type="PhylomeDB" id="P03835"/>
<dbReference type="BioCyc" id="EcoCyc:G7900-MONOMER"/>
<dbReference type="PRO" id="PR:P03835"/>
<dbReference type="Proteomes" id="UP000000625">
    <property type="component" value="Chromosome"/>
</dbReference>
<dbReference type="GO" id="GO:0003677">
    <property type="term" value="F:DNA binding"/>
    <property type="evidence" value="ECO:0007669"/>
    <property type="project" value="UniProtKB-KW"/>
</dbReference>
<dbReference type="GO" id="GO:0004803">
    <property type="term" value="F:transposase activity"/>
    <property type="evidence" value="ECO:0007669"/>
    <property type="project" value="InterPro"/>
</dbReference>
<dbReference type="GO" id="GO:0006313">
    <property type="term" value="P:DNA transposition"/>
    <property type="evidence" value="ECO:0007669"/>
    <property type="project" value="InterPro"/>
</dbReference>
<dbReference type="InterPro" id="IPR012337">
    <property type="entry name" value="RNaseH-like_sf"/>
</dbReference>
<dbReference type="InterPro" id="IPR047952">
    <property type="entry name" value="Transpos_IS4"/>
</dbReference>
<dbReference type="InterPro" id="IPR002559">
    <property type="entry name" value="Transposase_11"/>
</dbReference>
<dbReference type="InterPro" id="IPR024473">
    <property type="entry name" value="Transposases_IS4_N"/>
</dbReference>
<dbReference type="NCBIfam" id="NF033592">
    <property type="entry name" value="transpos_IS4_1"/>
    <property type="match status" value="1"/>
</dbReference>
<dbReference type="PANTHER" id="PTHR37529">
    <property type="entry name" value="TRANSPOSASE INSG FOR INSERTION SEQUENCE ELEMENT IS4-RELATED"/>
    <property type="match status" value="1"/>
</dbReference>
<dbReference type="PANTHER" id="PTHR37529:SF1">
    <property type="entry name" value="TRANSPOSASE INSG FOR INSERTION SEQUENCE ELEMENT IS4-RELATED"/>
    <property type="match status" value="1"/>
</dbReference>
<dbReference type="Pfam" id="PF01609">
    <property type="entry name" value="DDE_Tnp_1"/>
    <property type="match status" value="1"/>
</dbReference>
<dbReference type="Pfam" id="PF13006">
    <property type="entry name" value="Nterm_IS4"/>
    <property type="match status" value="1"/>
</dbReference>
<dbReference type="SUPFAM" id="SSF53098">
    <property type="entry name" value="Ribonuclease H-like"/>
    <property type="match status" value="1"/>
</dbReference>
<keyword id="KW-0233">DNA recombination</keyword>
<keyword id="KW-0238">DNA-binding</keyword>
<keyword id="KW-1185">Reference proteome</keyword>
<keyword id="KW-0814">Transposable element</keyword>
<keyword id="KW-0815">Transposition</keyword>
<protein>
    <recommendedName>
        <fullName>Transposase InsG for insertion sequence element IS4</fullName>
    </recommendedName>
</protein>
<gene>
    <name type="primary">insG</name>
    <name type="ordered locus">b4278</name>
    <name type="ordered locus">JW5767</name>
</gene>